<comment type="similarity">
    <text evidence="1">Belongs to the bacterial ribosomal protein bS21 family.</text>
</comment>
<name>RS21_FLAJ1</name>
<dbReference type="EMBL" id="CP000685">
    <property type="protein sequence ID" value="ABQ04965.1"/>
    <property type="molecule type" value="Genomic_DNA"/>
</dbReference>
<dbReference type="RefSeq" id="WP_012024008.1">
    <property type="nucleotide sequence ID" value="NZ_MUGZ01000012.1"/>
</dbReference>
<dbReference type="SMR" id="A5FIL0"/>
<dbReference type="STRING" id="376686.Fjoh_1933"/>
<dbReference type="KEGG" id="fjo:Fjoh_1933"/>
<dbReference type="eggNOG" id="COG0828">
    <property type="taxonomic scope" value="Bacteria"/>
</dbReference>
<dbReference type="HOGENOM" id="CLU_159258_2_0_10"/>
<dbReference type="OrthoDB" id="598353at2"/>
<dbReference type="Proteomes" id="UP000006694">
    <property type="component" value="Chromosome"/>
</dbReference>
<dbReference type="GO" id="GO:1990904">
    <property type="term" value="C:ribonucleoprotein complex"/>
    <property type="evidence" value="ECO:0007669"/>
    <property type="project" value="UniProtKB-KW"/>
</dbReference>
<dbReference type="GO" id="GO:0005840">
    <property type="term" value="C:ribosome"/>
    <property type="evidence" value="ECO:0007669"/>
    <property type="project" value="UniProtKB-KW"/>
</dbReference>
<dbReference type="GO" id="GO:0003735">
    <property type="term" value="F:structural constituent of ribosome"/>
    <property type="evidence" value="ECO:0007669"/>
    <property type="project" value="InterPro"/>
</dbReference>
<dbReference type="GO" id="GO:0006412">
    <property type="term" value="P:translation"/>
    <property type="evidence" value="ECO:0007669"/>
    <property type="project" value="UniProtKB-UniRule"/>
</dbReference>
<dbReference type="Gene3D" id="1.20.5.1150">
    <property type="entry name" value="Ribosomal protein S8"/>
    <property type="match status" value="1"/>
</dbReference>
<dbReference type="HAMAP" id="MF_00358">
    <property type="entry name" value="Ribosomal_bS21"/>
    <property type="match status" value="1"/>
</dbReference>
<dbReference type="InterPro" id="IPR001911">
    <property type="entry name" value="Ribosomal_bS21"/>
</dbReference>
<dbReference type="InterPro" id="IPR038380">
    <property type="entry name" value="Ribosomal_bS21_sf"/>
</dbReference>
<dbReference type="NCBIfam" id="TIGR00030">
    <property type="entry name" value="S21p"/>
    <property type="match status" value="1"/>
</dbReference>
<dbReference type="Pfam" id="PF01165">
    <property type="entry name" value="Ribosomal_S21"/>
    <property type="match status" value="1"/>
</dbReference>
<dbReference type="PRINTS" id="PR00976">
    <property type="entry name" value="RIBOSOMALS21"/>
</dbReference>
<sequence length="64" mass="7418">MLIIPIKDGENIDRALKRYKRKFDKTGTVRQLRARTAFIKPSVVKRAQIQKAAYIQTLKDSLES</sequence>
<feature type="chain" id="PRO_1000079407" description="Small ribosomal subunit protein bS21">
    <location>
        <begin position="1"/>
        <end position="64"/>
    </location>
</feature>
<gene>
    <name evidence="1" type="primary">rpsU</name>
    <name type="ordered locus">Fjoh_1933</name>
</gene>
<evidence type="ECO:0000255" key="1">
    <source>
        <dbReference type="HAMAP-Rule" id="MF_00358"/>
    </source>
</evidence>
<evidence type="ECO:0000305" key="2"/>
<keyword id="KW-0687">Ribonucleoprotein</keyword>
<keyword id="KW-0689">Ribosomal protein</keyword>
<protein>
    <recommendedName>
        <fullName evidence="1">Small ribosomal subunit protein bS21</fullName>
    </recommendedName>
    <alternativeName>
        <fullName evidence="2">30S ribosomal protein S21</fullName>
    </alternativeName>
</protein>
<organism>
    <name type="scientific">Flavobacterium johnsoniae (strain ATCC 17061 / DSM 2064 / JCM 8514 / BCRC 14874 / CCUG 350202 / NBRC 14942 / NCIMB 11054 / UW101)</name>
    <name type="common">Cytophaga johnsonae</name>
    <dbReference type="NCBI Taxonomy" id="376686"/>
    <lineage>
        <taxon>Bacteria</taxon>
        <taxon>Pseudomonadati</taxon>
        <taxon>Bacteroidota</taxon>
        <taxon>Flavobacteriia</taxon>
        <taxon>Flavobacteriales</taxon>
        <taxon>Flavobacteriaceae</taxon>
        <taxon>Flavobacterium</taxon>
    </lineage>
</organism>
<reference key="1">
    <citation type="journal article" date="2009" name="Appl. Environ. Microbiol.">
        <title>Novel features of the polysaccharide-digesting gliding bacterium Flavobacterium johnsoniae as revealed by genome sequence analysis.</title>
        <authorList>
            <person name="McBride M.J."/>
            <person name="Xie G."/>
            <person name="Martens E.C."/>
            <person name="Lapidus A."/>
            <person name="Henrissat B."/>
            <person name="Rhodes R.G."/>
            <person name="Goltsman E."/>
            <person name="Wang W."/>
            <person name="Xu J."/>
            <person name="Hunnicutt D.W."/>
            <person name="Staroscik A.M."/>
            <person name="Hoover T.R."/>
            <person name="Cheng Y.Q."/>
            <person name="Stein J.L."/>
        </authorList>
    </citation>
    <scope>NUCLEOTIDE SEQUENCE [LARGE SCALE GENOMIC DNA]</scope>
    <source>
        <strain>ATCC 17061 / DSM 2064 / JCM 8514 / BCRC 14874 / CCUG 350202 / NBRC 14942 / NCIMB 11054 / UW101</strain>
    </source>
</reference>
<accession>A5FIL0</accession>
<proteinExistence type="inferred from homology"/>